<proteinExistence type="evidence at transcript level"/>
<keyword id="KW-0378">Hydrolase</keyword>
<keyword id="KW-0645">Protease</keyword>
<keyword id="KW-1185">Reference proteome</keyword>
<keyword id="KW-0788">Thiol protease</keyword>
<keyword id="KW-0833">Ubl conjugation pathway</keyword>
<sequence>MAEFSDPPPSNLSSSHKLTKPNQTLDESSPTAPIRDLVTNSLSLSSPIRQIQALSPAKPDGSSSSPPDKTLNFNPEENRDVNPDESSSSPSDKTLIAPPAQISPVSNNNHLRITNTSDSYLYRPPRRYIEYESDDDELNKMEPTKPLQLSWWYPRIEPTGVGAGLYNSGNTCFIASVLQCFTHTVPLIDSLRSFMYGNPCNCGNEKFCVMQALRDHIELALRSSGYGINIDRFRDNLTYFSSDFMINHQEDAHEFLQSFLDKLERCCLDPKNQLGSVSSQDLNIVDNVFGGGLMSTLCCCNCNSVSNTFEPSLGWSLEIEDVNTLWKALESFTCVEKLEDQLTCDNCKEKVTKEKQLRFDKLPPVATFHLKRFTNDGVTMEKIFDHIEFPLELDLSPFMSSNHDPEVSTRYHLYAFVEHIGIRATFGHYSSYVRSAPETWHNFDDSKVTRISEERVLSRPAYILFYAREGTPWFSSTFEQLKTVFEATPLHFSPVSVLDNSYESVDNSSKACNDSVGVSIPDVKWPDSCCQEPKEEVFHSAESSNNEDSSAMIDALGSPQSEKPFAETSQQTEPESCPTENKAYIDKSEKPFAETSQPKEPKPFADRASIDAPLLKVQNQDISPKRKAGERATLGGPKLKYQKPNSHQKRQGTFQIQRAHLQTKKQEESRKTKRPLFRSNVAASAPDPKYKNHALSYLNRAQTPRARKLANALSDSPTKKKKSSNMRRSIKL</sequence>
<accession>Q9FIQ1</accession>
<accession>Q9FPS6</accession>
<name>UBP21_ARATH</name>
<reference key="1">
    <citation type="journal article" date="2000" name="Plant Physiol.">
        <title>The ubiquitin-specific protease family from Arabidopsis. AtUBP1 and 2 are required for the resistance to the amino acid analog canavanine.</title>
        <authorList>
            <person name="Yan N."/>
            <person name="Doelling J.H."/>
            <person name="Falbel T.G."/>
            <person name="Durski A.M."/>
            <person name="Vierstra R.D."/>
        </authorList>
    </citation>
    <scope>NUCLEOTIDE SEQUENCE [MRNA]</scope>
    <scope>GENE FAMILY ORGANIZATION</scope>
    <scope>NOMENCLATURE</scope>
    <source>
        <strain>cv. Columbia</strain>
    </source>
</reference>
<reference key="2">
    <citation type="journal article" date="1998" name="DNA Res.">
        <title>Structural analysis of Arabidopsis thaliana chromosome 5. VIII. Sequence features of the regions of 1,081,958 bp covered by seventeen physically assigned P1 and TAC clones.</title>
        <authorList>
            <person name="Asamizu E."/>
            <person name="Sato S."/>
            <person name="Kaneko T."/>
            <person name="Nakamura Y."/>
            <person name="Kotani H."/>
            <person name="Miyajima N."/>
            <person name="Tabata S."/>
        </authorList>
    </citation>
    <scope>NUCLEOTIDE SEQUENCE [LARGE SCALE GENOMIC DNA]</scope>
    <source>
        <strain>cv. Columbia</strain>
    </source>
</reference>
<reference key="3">
    <citation type="journal article" date="2017" name="Plant J.">
        <title>Araport11: a complete reannotation of the Arabidopsis thaliana reference genome.</title>
        <authorList>
            <person name="Cheng C.Y."/>
            <person name="Krishnakumar V."/>
            <person name="Chan A.P."/>
            <person name="Thibaud-Nissen F."/>
            <person name="Schobel S."/>
            <person name="Town C.D."/>
        </authorList>
    </citation>
    <scope>GENOME REANNOTATION</scope>
    <source>
        <strain>cv. Columbia</strain>
    </source>
</reference>
<dbReference type="EC" id="3.4.19.12"/>
<dbReference type="EMBL" id="AF302669">
    <property type="protein sequence ID" value="AAG42759.1"/>
    <property type="molecule type" value="mRNA"/>
</dbReference>
<dbReference type="EMBL" id="AB016882">
    <property type="protein sequence ID" value="BAB08918.1"/>
    <property type="molecule type" value="Genomic_DNA"/>
</dbReference>
<dbReference type="EMBL" id="CP002688">
    <property type="protein sequence ID" value="AED95420.1"/>
    <property type="molecule type" value="Genomic_DNA"/>
</dbReference>
<dbReference type="RefSeq" id="NP_568667.1">
    <property type="nucleotide sequence ID" value="NM_124044.2"/>
</dbReference>
<dbReference type="SMR" id="Q9FIQ1"/>
<dbReference type="FunCoup" id="Q9FIQ1">
    <property type="interactions" value="305"/>
</dbReference>
<dbReference type="STRING" id="3702.Q9FIQ1"/>
<dbReference type="MEROPS" id="C19.A15"/>
<dbReference type="iPTMnet" id="Q9FIQ1"/>
<dbReference type="PaxDb" id="3702-AT5G46740.1"/>
<dbReference type="ProteomicsDB" id="233050"/>
<dbReference type="EnsemblPlants" id="AT5G46740.1">
    <property type="protein sequence ID" value="AT5G46740.1"/>
    <property type="gene ID" value="AT5G46740"/>
</dbReference>
<dbReference type="GeneID" id="834717"/>
<dbReference type="Gramene" id="AT5G46740.1">
    <property type="protein sequence ID" value="AT5G46740.1"/>
    <property type="gene ID" value="AT5G46740"/>
</dbReference>
<dbReference type="KEGG" id="ath:AT5G46740"/>
<dbReference type="Araport" id="AT5G46740"/>
<dbReference type="TAIR" id="AT5G46740">
    <property type="gene designation" value="UBP21"/>
</dbReference>
<dbReference type="eggNOG" id="KOG1865">
    <property type="taxonomic scope" value="Eukaryota"/>
</dbReference>
<dbReference type="HOGENOM" id="CLU_018749_0_0_1"/>
<dbReference type="InParanoid" id="Q9FIQ1"/>
<dbReference type="OMA" id="WYPRIEP"/>
<dbReference type="PhylomeDB" id="Q9FIQ1"/>
<dbReference type="PRO" id="PR:Q9FIQ1"/>
<dbReference type="Proteomes" id="UP000006548">
    <property type="component" value="Chromosome 5"/>
</dbReference>
<dbReference type="ExpressionAtlas" id="Q9FIQ1">
    <property type="expression patterns" value="baseline and differential"/>
</dbReference>
<dbReference type="GO" id="GO:0004843">
    <property type="term" value="F:cysteine-type deubiquitinase activity"/>
    <property type="evidence" value="ECO:0007669"/>
    <property type="project" value="UniProtKB-EC"/>
</dbReference>
<dbReference type="GO" id="GO:0006281">
    <property type="term" value="P:DNA repair"/>
    <property type="evidence" value="ECO:0000315"/>
    <property type="project" value="TAIR"/>
</dbReference>
<dbReference type="GO" id="GO:0016579">
    <property type="term" value="P:protein deubiquitination"/>
    <property type="evidence" value="ECO:0007669"/>
    <property type="project" value="InterPro"/>
</dbReference>
<dbReference type="GO" id="GO:0006508">
    <property type="term" value="P:proteolysis"/>
    <property type="evidence" value="ECO:0007669"/>
    <property type="project" value="UniProtKB-KW"/>
</dbReference>
<dbReference type="CDD" id="cd02661">
    <property type="entry name" value="Peptidase_C19E"/>
    <property type="match status" value="1"/>
</dbReference>
<dbReference type="FunFam" id="3.90.70.10:FF:000116">
    <property type="entry name" value="Ubiquitin carboxyl-terminal hydrolase 20"/>
    <property type="match status" value="1"/>
</dbReference>
<dbReference type="Gene3D" id="3.90.70.10">
    <property type="entry name" value="Cysteine proteinases"/>
    <property type="match status" value="1"/>
</dbReference>
<dbReference type="InterPro" id="IPR038765">
    <property type="entry name" value="Papain-like_cys_pep_sf"/>
</dbReference>
<dbReference type="InterPro" id="IPR050164">
    <property type="entry name" value="Peptidase_C19"/>
</dbReference>
<dbReference type="InterPro" id="IPR001394">
    <property type="entry name" value="Peptidase_C19_UCH"/>
</dbReference>
<dbReference type="InterPro" id="IPR018200">
    <property type="entry name" value="USP_CS"/>
</dbReference>
<dbReference type="InterPro" id="IPR028889">
    <property type="entry name" value="USP_dom"/>
</dbReference>
<dbReference type="PANTHER" id="PTHR24006">
    <property type="entry name" value="UBIQUITIN CARBOXYL-TERMINAL HYDROLASE"/>
    <property type="match status" value="1"/>
</dbReference>
<dbReference type="PANTHER" id="PTHR24006:SF746">
    <property type="entry name" value="UBIQUITIN CARBOXYL-TERMINAL HYDROLASE 21"/>
    <property type="match status" value="1"/>
</dbReference>
<dbReference type="Pfam" id="PF00443">
    <property type="entry name" value="UCH"/>
    <property type="match status" value="1"/>
</dbReference>
<dbReference type="SUPFAM" id="SSF54001">
    <property type="entry name" value="Cysteine proteinases"/>
    <property type="match status" value="1"/>
</dbReference>
<dbReference type="PROSITE" id="PS00972">
    <property type="entry name" value="USP_1"/>
    <property type="match status" value="1"/>
</dbReference>
<dbReference type="PROSITE" id="PS00973">
    <property type="entry name" value="USP_2"/>
    <property type="match status" value="1"/>
</dbReference>
<dbReference type="PROSITE" id="PS50235">
    <property type="entry name" value="USP_3"/>
    <property type="match status" value="1"/>
</dbReference>
<evidence type="ECO:0000250" key="1"/>
<evidence type="ECO:0000255" key="2">
    <source>
        <dbReference type="PROSITE-ProRule" id="PRU10092"/>
    </source>
</evidence>
<evidence type="ECO:0000255" key="3">
    <source>
        <dbReference type="PROSITE-ProRule" id="PRU10093"/>
    </source>
</evidence>
<evidence type="ECO:0000256" key="4">
    <source>
        <dbReference type="SAM" id="MobiDB-lite"/>
    </source>
</evidence>
<evidence type="ECO:0000305" key="5"/>
<organism>
    <name type="scientific">Arabidopsis thaliana</name>
    <name type="common">Mouse-ear cress</name>
    <dbReference type="NCBI Taxonomy" id="3702"/>
    <lineage>
        <taxon>Eukaryota</taxon>
        <taxon>Viridiplantae</taxon>
        <taxon>Streptophyta</taxon>
        <taxon>Embryophyta</taxon>
        <taxon>Tracheophyta</taxon>
        <taxon>Spermatophyta</taxon>
        <taxon>Magnoliopsida</taxon>
        <taxon>eudicotyledons</taxon>
        <taxon>Gunneridae</taxon>
        <taxon>Pentapetalae</taxon>
        <taxon>rosids</taxon>
        <taxon>malvids</taxon>
        <taxon>Brassicales</taxon>
        <taxon>Brassicaceae</taxon>
        <taxon>Camelineae</taxon>
        <taxon>Arabidopsis</taxon>
    </lineage>
</organism>
<feature type="chain" id="PRO_0000313047" description="Ubiquitin carboxyl-terminal hydrolase 21">
    <location>
        <begin position="1"/>
        <end position="732"/>
    </location>
</feature>
<feature type="domain" description="USP">
    <location>
        <begin position="163"/>
        <end position="469"/>
    </location>
</feature>
<feature type="region of interest" description="Disordered" evidence="4">
    <location>
        <begin position="1"/>
        <end position="111"/>
    </location>
</feature>
<feature type="region of interest" description="Disordered" evidence="4">
    <location>
        <begin position="534"/>
        <end position="732"/>
    </location>
</feature>
<feature type="compositionally biased region" description="Pro residues" evidence="4">
    <location>
        <begin position="1"/>
        <end position="10"/>
    </location>
</feature>
<feature type="compositionally biased region" description="Polar residues" evidence="4">
    <location>
        <begin position="11"/>
        <end position="31"/>
    </location>
</feature>
<feature type="compositionally biased region" description="Polar residues" evidence="4">
    <location>
        <begin position="38"/>
        <end position="53"/>
    </location>
</feature>
<feature type="compositionally biased region" description="Low complexity" evidence="4">
    <location>
        <begin position="55"/>
        <end position="69"/>
    </location>
</feature>
<feature type="compositionally biased region" description="Low complexity" evidence="4">
    <location>
        <begin position="540"/>
        <end position="551"/>
    </location>
</feature>
<feature type="compositionally biased region" description="Basic and acidic residues" evidence="4">
    <location>
        <begin position="583"/>
        <end position="609"/>
    </location>
</feature>
<feature type="compositionally biased region" description="Basic residues" evidence="4">
    <location>
        <begin position="719"/>
        <end position="732"/>
    </location>
</feature>
<feature type="active site" description="Nucleophile" evidence="2 3">
    <location>
        <position position="172"/>
    </location>
</feature>
<feature type="active site" description="Proton acceptor" evidence="2 3">
    <location>
        <position position="428"/>
    </location>
</feature>
<feature type="sequence conflict" description="In Ref. 1; AAG42759." evidence="5" ref="1">
    <original>L</original>
    <variation>LWRVSY</variation>
    <location>
        <position position="732"/>
    </location>
</feature>
<comment type="function">
    <text evidence="1">Recognizes and hydrolyzes the peptide bond at the C-terminal Gly of ubiquitin. Involved in the processing of poly-ubiquitin precursors as well as that of ubiquitinated proteins (By similarity).</text>
</comment>
<comment type="catalytic activity">
    <reaction>
        <text>Thiol-dependent hydrolysis of ester, thioester, amide, peptide and isopeptide bonds formed by the C-terminal Gly of ubiquitin (a 76-residue protein attached to proteins as an intracellular targeting signal).</text>
        <dbReference type="EC" id="3.4.19.12"/>
    </reaction>
</comment>
<comment type="similarity">
    <text evidence="5">Belongs to the peptidase C19 family.</text>
</comment>
<gene>
    <name type="primary">UBP21</name>
    <name type="ordered locus">At5g46740</name>
    <name type="ORF">MZA15.16</name>
</gene>
<protein>
    <recommendedName>
        <fullName>Ubiquitin carboxyl-terminal hydrolase 21</fullName>
        <ecNumber>3.4.19.12</ecNumber>
    </recommendedName>
    <alternativeName>
        <fullName>Deubiquitinating enzyme 21</fullName>
        <shortName>AtUBP21</shortName>
    </alternativeName>
    <alternativeName>
        <fullName>Ubiquitin thioesterase 21</fullName>
    </alternativeName>
    <alternativeName>
        <fullName>Ubiquitin-specific-processing protease 21</fullName>
    </alternativeName>
</protein>